<gene>
    <name evidence="1" type="primary">rplX</name>
    <name type="ordered locus">Sbal223_4045</name>
</gene>
<sequence length="104" mass="11297">MAAKIRREDEVIVLAGKDKGKRAKVSQVLPTGKLIVEGINLVKKHQKPNPQLGVAGGIVEKEAPIQASNVAIFNSATGKADRVGFRFEDGKKVRFFKSNSELVK</sequence>
<comment type="function">
    <text evidence="1">One of two assembly initiator proteins, it binds directly to the 5'-end of the 23S rRNA, where it nucleates assembly of the 50S subunit.</text>
</comment>
<comment type="function">
    <text evidence="1">One of the proteins that surrounds the polypeptide exit tunnel on the outside of the subunit.</text>
</comment>
<comment type="subunit">
    <text evidence="1">Part of the 50S ribosomal subunit.</text>
</comment>
<comment type="similarity">
    <text evidence="1">Belongs to the universal ribosomal protein uL24 family.</text>
</comment>
<name>RL24_SHEB2</name>
<keyword id="KW-0687">Ribonucleoprotein</keyword>
<keyword id="KW-0689">Ribosomal protein</keyword>
<keyword id="KW-0694">RNA-binding</keyword>
<keyword id="KW-0699">rRNA-binding</keyword>
<organism>
    <name type="scientific">Shewanella baltica (strain OS223)</name>
    <dbReference type="NCBI Taxonomy" id="407976"/>
    <lineage>
        <taxon>Bacteria</taxon>
        <taxon>Pseudomonadati</taxon>
        <taxon>Pseudomonadota</taxon>
        <taxon>Gammaproteobacteria</taxon>
        <taxon>Alteromonadales</taxon>
        <taxon>Shewanellaceae</taxon>
        <taxon>Shewanella</taxon>
    </lineage>
</organism>
<reference key="1">
    <citation type="submission" date="2008-12" db="EMBL/GenBank/DDBJ databases">
        <title>Complete sequence of chromosome of Shewanella baltica OS223.</title>
        <authorList>
            <consortium name="US DOE Joint Genome Institute"/>
            <person name="Lucas S."/>
            <person name="Copeland A."/>
            <person name="Lapidus A."/>
            <person name="Glavina del Rio T."/>
            <person name="Dalin E."/>
            <person name="Tice H."/>
            <person name="Bruce D."/>
            <person name="Goodwin L."/>
            <person name="Pitluck S."/>
            <person name="Chertkov O."/>
            <person name="Meincke L."/>
            <person name="Brettin T."/>
            <person name="Detter J.C."/>
            <person name="Han C."/>
            <person name="Kuske C.R."/>
            <person name="Larimer F."/>
            <person name="Land M."/>
            <person name="Hauser L."/>
            <person name="Kyrpides N."/>
            <person name="Ovchinnikova G."/>
            <person name="Brettar I."/>
            <person name="Rodrigues J."/>
            <person name="Konstantinidis K."/>
            <person name="Tiedje J."/>
        </authorList>
    </citation>
    <scope>NUCLEOTIDE SEQUENCE [LARGE SCALE GENOMIC DNA]</scope>
    <source>
        <strain>OS223</strain>
    </source>
</reference>
<dbReference type="EMBL" id="CP001252">
    <property type="protein sequence ID" value="ACK48518.1"/>
    <property type="molecule type" value="Genomic_DNA"/>
</dbReference>
<dbReference type="RefSeq" id="WP_006083589.1">
    <property type="nucleotide sequence ID" value="NC_011663.1"/>
</dbReference>
<dbReference type="SMR" id="B8EBJ4"/>
<dbReference type="GeneID" id="11770568"/>
<dbReference type="KEGG" id="sbp:Sbal223_4045"/>
<dbReference type="HOGENOM" id="CLU_093315_2_2_6"/>
<dbReference type="Proteomes" id="UP000002507">
    <property type="component" value="Chromosome"/>
</dbReference>
<dbReference type="GO" id="GO:1990904">
    <property type="term" value="C:ribonucleoprotein complex"/>
    <property type="evidence" value="ECO:0007669"/>
    <property type="project" value="UniProtKB-KW"/>
</dbReference>
<dbReference type="GO" id="GO:0005840">
    <property type="term" value="C:ribosome"/>
    <property type="evidence" value="ECO:0007669"/>
    <property type="project" value="UniProtKB-KW"/>
</dbReference>
<dbReference type="GO" id="GO:0019843">
    <property type="term" value="F:rRNA binding"/>
    <property type="evidence" value="ECO:0007669"/>
    <property type="project" value="UniProtKB-UniRule"/>
</dbReference>
<dbReference type="GO" id="GO:0003735">
    <property type="term" value="F:structural constituent of ribosome"/>
    <property type="evidence" value="ECO:0007669"/>
    <property type="project" value="InterPro"/>
</dbReference>
<dbReference type="GO" id="GO:0006412">
    <property type="term" value="P:translation"/>
    <property type="evidence" value="ECO:0007669"/>
    <property type="project" value="UniProtKB-UniRule"/>
</dbReference>
<dbReference type="CDD" id="cd06089">
    <property type="entry name" value="KOW_RPL26"/>
    <property type="match status" value="1"/>
</dbReference>
<dbReference type="FunFam" id="2.30.30.30:FF:000004">
    <property type="entry name" value="50S ribosomal protein L24"/>
    <property type="match status" value="1"/>
</dbReference>
<dbReference type="Gene3D" id="2.30.30.30">
    <property type="match status" value="1"/>
</dbReference>
<dbReference type="HAMAP" id="MF_01326_B">
    <property type="entry name" value="Ribosomal_uL24_B"/>
    <property type="match status" value="1"/>
</dbReference>
<dbReference type="InterPro" id="IPR005824">
    <property type="entry name" value="KOW"/>
</dbReference>
<dbReference type="InterPro" id="IPR014722">
    <property type="entry name" value="Rib_uL2_dom2"/>
</dbReference>
<dbReference type="InterPro" id="IPR003256">
    <property type="entry name" value="Ribosomal_uL24"/>
</dbReference>
<dbReference type="InterPro" id="IPR005825">
    <property type="entry name" value="Ribosomal_uL24_CS"/>
</dbReference>
<dbReference type="InterPro" id="IPR041988">
    <property type="entry name" value="Ribosomal_uL24_KOW"/>
</dbReference>
<dbReference type="InterPro" id="IPR008991">
    <property type="entry name" value="Translation_prot_SH3-like_sf"/>
</dbReference>
<dbReference type="NCBIfam" id="TIGR01079">
    <property type="entry name" value="rplX_bact"/>
    <property type="match status" value="1"/>
</dbReference>
<dbReference type="PANTHER" id="PTHR12903">
    <property type="entry name" value="MITOCHONDRIAL RIBOSOMAL PROTEIN L24"/>
    <property type="match status" value="1"/>
</dbReference>
<dbReference type="Pfam" id="PF00467">
    <property type="entry name" value="KOW"/>
    <property type="match status" value="1"/>
</dbReference>
<dbReference type="Pfam" id="PF17136">
    <property type="entry name" value="ribosomal_L24"/>
    <property type="match status" value="1"/>
</dbReference>
<dbReference type="SMART" id="SM00739">
    <property type="entry name" value="KOW"/>
    <property type="match status" value="1"/>
</dbReference>
<dbReference type="SUPFAM" id="SSF50104">
    <property type="entry name" value="Translation proteins SH3-like domain"/>
    <property type="match status" value="1"/>
</dbReference>
<dbReference type="PROSITE" id="PS01108">
    <property type="entry name" value="RIBOSOMAL_L24"/>
    <property type="match status" value="1"/>
</dbReference>
<proteinExistence type="inferred from homology"/>
<evidence type="ECO:0000255" key="1">
    <source>
        <dbReference type="HAMAP-Rule" id="MF_01326"/>
    </source>
</evidence>
<evidence type="ECO:0000305" key="2"/>
<protein>
    <recommendedName>
        <fullName evidence="1">Large ribosomal subunit protein uL24</fullName>
    </recommendedName>
    <alternativeName>
        <fullName evidence="2">50S ribosomal protein L24</fullName>
    </alternativeName>
</protein>
<accession>B8EBJ4</accession>
<feature type="chain" id="PRO_1000165962" description="Large ribosomal subunit protein uL24">
    <location>
        <begin position="1"/>
        <end position="104"/>
    </location>
</feature>